<evidence type="ECO:0000255" key="1">
    <source>
        <dbReference type="HAMAP-Rule" id="MF_00235"/>
    </source>
</evidence>
<organism>
    <name type="scientific">Buchnera aphidicola subsp. Acyrthosiphon pisum (strain Tuc7)</name>
    <dbReference type="NCBI Taxonomy" id="561501"/>
    <lineage>
        <taxon>Bacteria</taxon>
        <taxon>Pseudomonadati</taxon>
        <taxon>Pseudomonadota</taxon>
        <taxon>Gammaproteobacteria</taxon>
        <taxon>Enterobacterales</taxon>
        <taxon>Erwiniaceae</taxon>
        <taxon>Buchnera</taxon>
    </lineage>
</organism>
<protein>
    <recommendedName>
        <fullName evidence="1">Adenylate kinase</fullName>
        <shortName evidence="1">AK</shortName>
        <ecNumber evidence="1">2.7.4.3</ecNumber>
    </recommendedName>
    <alternativeName>
        <fullName evidence="1">ATP-AMP transphosphorylase</fullName>
    </alternativeName>
    <alternativeName>
        <fullName evidence="1">ATP:AMP phosphotransferase</fullName>
    </alternativeName>
    <alternativeName>
        <fullName evidence="1">Adenylate monophosphate kinase</fullName>
    </alternativeName>
</protein>
<dbReference type="EC" id="2.7.4.3" evidence="1"/>
<dbReference type="EMBL" id="CP001158">
    <property type="protein sequence ID" value="ACL30278.1"/>
    <property type="molecule type" value="Genomic_DNA"/>
</dbReference>
<dbReference type="RefSeq" id="WP_009874438.1">
    <property type="nucleotide sequence ID" value="NC_011834.1"/>
</dbReference>
<dbReference type="SMR" id="B8D813"/>
<dbReference type="KEGG" id="bau:BUAPTUC7_478"/>
<dbReference type="HOGENOM" id="CLU_032354_1_2_6"/>
<dbReference type="UniPathway" id="UPA00588">
    <property type="reaction ID" value="UER00649"/>
</dbReference>
<dbReference type="GO" id="GO:0005737">
    <property type="term" value="C:cytoplasm"/>
    <property type="evidence" value="ECO:0007669"/>
    <property type="project" value="UniProtKB-SubCell"/>
</dbReference>
<dbReference type="GO" id="GO:0004017">
    <property type="term" value="F:adenylate kinase activity"/>
    <property type="evidence" value="ECO:0007669"/>
    <property type="project" value="UniProtKB-UniRule"/>
</dbReference>
<dbReference type="GO" id="GO:0005524">
    <property type="term" value="F:ATP binding"/>
    <property type="evidence" value="ECO:0007669"/>
    <property type="project" value="UniProtKB-UniRule"/>
</dbReference>
<dbReference type="GO" id="GO:0044209">
    <property type="term" value="P:AMP salvage"/>
    <property type="evidence" value="ECO:0007669"/>
    <property type="project" value="UniProtKB-UniRule"/>
</dbReference>
<dbReference type="CDD" id="cd01428">
    <property type="entry name" value="ADK"/>
    <property type="match status" value="1"/>
</dbReference>
<dbReference type="FunFam" id="3.40.50.300:FF:000106">
    <property type="entry name" value="Adenylate kinase mitochondrial"/>
    <property type="match status" value="1"/>
</dbReference>
<dbReference type="Gene3D" id="3.40.50.300">
    <property type="entry name" value="P-loop containing nucleotide triphosphate hydrolases"/>
    <property type="match status" value="1"/>
</dbReference>
<dbReference type="HAMAP" id="MF_00235">
    <property type="entry name" value="Adenylate_kinase_Adk"/>
    <property type="match status" value="1"/>
</dbReference>
<dbReference type="InterPro" id="IPR006259">
    <property type="entry name" value="Adenyl_kin_sub"/>
</dbReference>
<dbReference type="InterPro" id="IPR000850">
    <property type="entry name" value="Adenylat/UMP-CMP_kin"/>
</dbReference>
<dbReference type="InterPro" id="IPR033690">
    <property type="entry name" value="Adenylat_kinase_CS"/>
</dbReference>
<dbReference type="InterPro" id="IPR007862">
    <property type="entry name" value="Adenylate_kinase_lid-dom"/>
</dbReference>
<dbReference type="InterPro" id="IPR027417">
    <property type="entry name" value="P-loop_NTPase"/>
</dbReference>
<dbReference type="NCBIfam" id="TIGR01351">
    <property type="entry name" value="adk"/>
    <property type="match status" value="1"/>
</dbReference>
<dbReference type="NCBIfam" id="NF001379">
    <property type="entry name" value="PRK00279.1-1"/>
    <property type="match status" value="1"/>
</dbReference>
<dbReference type="NCBIfam" id="NF001381">
    <property type="entry name" value="PRK00279.1-3"/>
    <property type="match status" value="1"/>
</dbReference>
<dbReference type="PANTHER" id="PTHR23359">
    <property type="entry name" value="NUCLEOTIDE KINASE"/>
    <property type="match status" value="1"/>
</dbReference>
<dbReference type="Pfam" id="PF00406">
    <property type="entry name" value="ADK"/>
    <property type="match status" value="1"/>
</dbReference>
<dbReference type="Pfam" id="PF05191">
    <property type="entry name" value="ADK_lid"/>
    <property type="match status" value="1"/>
</dbReference>
<dbReference type="PRINTS" id="PR00094">
    <property type="entry name" value="ADENYLTKNASE"/>
</dbReference>
<dbReference type="SUPFAM" id="SSF52540">
    <property type="entry name" value="P-loop containing nucleoside triphosphate hydrolases"/>
    <property type="match status" value="1"/>
</dbReference>
<dbReference type="PROSITE" id="PS00113">
    <property type="entry name" value="ADENYLATE_KINASE"/>
    <property type="match status" value="1"/>
</dbReference>
<reference key="1">
    <citation type="journal article" date="2009" name="Science">
        <title>The dynamics and time scale of ongoing genomic erosion in symbiotic bacteria.</title>
        <authorList>
            <person name="Moran N.A."/>
            <person name="McLaughlin H.J."/>
            <person name="Sorek R."/>
        </authorList>
    </citation>
    <scope>NUCLEOTIDE SEQUENCE [LARGE SCALE GENOMIC DNA]</scope>
    <source>
        <strain>Tuc7</strain>
    </source>
</reference>
<accession>B8D813</accession>
<comment type="function">
    <text evidence="1">Catalyzes the reversible transfer of the terminal phosphate group between ATP and AMP. Plays an important role in cellular energy homeostasis and in adenine nucleotide metabolism.</text>
</comment>
<comment type="catalytic activity">
    <reaction evidence="1">
        <text>AMP + ATP = 2 ADP</text>
        <dbReference type="Rhea" id="RHEA:12973"/>
        <dbReference type="ChEBI" id="CHEBI:30616"/>
        <dbReference type="ChEBI" id="CHEBI:456215"/>
        <dbReference type="ChEBI" id="CHEBI:456216"/>
        <dbReference type="EC" id="2.7.4.3"/>
    </reaction>
</comment>
<comment type="pathway">
    <text evidence="1">Purine metabolism; AMP biosynthesis via salvage pathway; AMP from ADP: step 1/1.</text>
</comment>
<comment type="subunit">
    <text evidence="1">Monomer.</text>
</comment>
<comment type="subcellular location">
    <subcellularLocation>
        <location evidence="1">Cytoplasm</location>
    </subcellularLocation>
</comment>
<comment type="domain">
    <text evidence="1">Consists of three domains, a large central CORE domain and two small peripheral domains, NMPbind and LID, which undergo movements during catalysis. The LID domain closes over the site of phosphoryl transfer upon ATP binding. Assembling and dissambling the active center during each catalytic cycle provides an effective means to prevent ATP hydrolysis.</text>
</comment>
<comment type="similarity">
    <text evidence="1">Belongs to the adenylate kinase family.</text>
</comment>
<keyword id="KW-0067">ATP-binding</keyword>
<keyword id="KW-0963">Cytoplasm</keyword>
<keyword id="KW-0418">Kinase</keyword>
<keyword id="KW-0545">Nucleotide biosynthesis</keyword>
<keyword id="KW-0547">Nucleotide-binding</keyword>
<keyword id="KW-0808">Transferase</keyword>
<sequence>MRIILLGAPGTGKGTQGKFITEKYKIPQISTGDMLRESVVLKNKIGMIIKNIIEEGKLVSDEIVCHLIKNRIKKHDCINGFILDGFPRTIQQALYLSKKNIKIDYVLEFIIPHEYILERISGRRIHIQSGRIYHVKFKPPKIKDKDDLTGQTLITRKDDTKEGIKKRLEEYKKVHDPLVQYYIHEKKRGNIKFFQIDAMLSFSSIRKKLETILKK</sequence>
<proteinExistence type="inferred from homology"/>
<gene>
    <name evidence="1" type="primary">adk</name>
    <name type="ordered locus">BUAPTUC7_478</name>
</gene>
<feature type="chain" id="PRO_1000191129" description="Adenylate kinase">
    <location>
        <begin position="1"/>
        <end position="215"/>
    </location>
</feature>
<feature type="region of interest" description="NMP" evidence="1">
    <location>
        <begin position="30"/>
        <end position="59"/>
    </location>
</feature>
<feature type="region of interest" description="LID">
    <location>
        <begin position="122"/>
        <end position="159"/>
    </location>
</feature>
<feature type="binding site" evidence="1">
    <location>
        <begin position="10"/>
        <end position="15"/>
    </location>
    <ligand>
        <name>ATP</name>
        <dbReference type="ChEBI" id="CHEBI:30616"/>
    </ligand>
</feature>
<feature type="binding site" evidence="1">
    <location>
        <position position="31"/>
    </location>
    <ligand>
        <name>AMP</name>
        <dbReference type="ChEBI" id="CHEBI:456215"/>
    </ligand>
</feature>
<feature type="binding site" evidence="1">
    <location>
        <position position="36"/>
    </location>
    <ligand>
        <name>AMP</name>
        <dbReference type="ChEBI" id="CHEBI:456215"/>
    </ligand>
</feature>
<feature type="binding site" evidence="1">
    <location>
        <begin position="57"/>
        <end position="59"/>
    </location>
    <ligand>
        <name>AMP</name>
        <dbReference type="ChEBI" id="CHEBI:456215"/>
    </ligand>
</feature>
<feature type="binding site" evidence="1">
    <location>
        <begin position="85"/>
        <end position="88"/>
    </location>
    <ligand>
        <name>AMP</name>
        <dbReference type="ChEBI" id="CHEBI:456215"/>
    </ligand>
</feature>
<feature type="binding site" evidence="1">
    <location>
        <position position="92"/>
    </location>
    <ligand>
        <name>AMP</name>
        <dbReference type="ChEBI" id="CHEBI:456215"/>
    </ligand>
</feature>
<feature type="binding site" evidence="1">
    <location>
        <position position="123"/>
    </location>
    <ligand>
        <name>ATP</name>
        <dbReference type="ChEBI" id="CHEBI:30616"/>
    </ligand>
</feature>
<feature type="binding site" evidence="1">
    <location>
        <begin position="132"/>
        <end position="133"/>
    </location>
    <ligand>
        <name>ATP</name>
        <dbReference type="ChEBI" id="CHEBI:30616"/>
    </ligand>
</feature>
<feature type="binding site" evidence="1">
    <location>
        <position position="156"/>
    </location>
    <ligand>
        <name>AMP</name>
        <dbReference type="ChEBI" id="CHEBI:456215"/>
    </ligand>
</feature>
<feature type="binding site" evidence="1">
    <location>
        <position position="167"/>
    </location>
    <ligand>
        <name>AMP</name>
        <dbReference type="ChEBI" id="CHEBI:456215"/>
    </ligand>
</feature>
<feature type="binding site" evidence="1">
    <location>
        <position position="200"/>
    </location>
    <ligand>
        <name>ATP</name>
        <dbReference type="ChEBI" id="CHEBI:30616"/>
    </ligand>
</feature>
<name>KAD_BUCAT</name>